<gene>
    <name evidence="7" type="primary">RPN4</name>
    <name type="ordered locus">CAGL0K01727g</name>
</gene>
<accession>Q6FN94</accession>
<sequence>MTSIDLGLKRTLTDVLEDELYNMRLREQETAQEQLDLREAGKVRQVQLQQQQMFSQYADPSVTMMSGDVACEGVLSTAPANLLANPDIRQAPAPQAQAQMLQVNPEVLISYANKNSAHMNVSAVDDKLNRGLVDENSYYDDVDYSSMNAKMADWQLDDNVAMLDNNDARLIFDNEFADDDDLSDDENLFDEGLENYHNELVSSNSPIESLDVAEHKESVDDRLRKYHLDNIQNILSKTSTNDKDILQIKLPSDFTTTNLHSTNPSGLIEDPSQLVLGSSKKITEDTHVEEESKNLPDLTELTSATEIEDILLAVDSDDDDLYTKPIAKQTTKKDNSKPVEKTVVEKTSSVTKAGSNHSRSTLARPTAHARKLSSSRKQAPKVYNPKTTTKSTHTHSKNNATHEAFVCELVNSVTNEVCGAQFSRTYDLTRHQNTIHAKKRSIFRCSECIRALGDEGFQKTFSRLDALTRHIKAKHENLSLEERQQVTKYAKSNIGFVTA</sequence>
<proteinExistence type="evidence at protein level"/>
<protein>
    <recommendedName>
        <fullName evidence="7">C2H2-type transcription factor RPN4</fullName>
    </recommendedName>
</protein>
<evidence type="ECO:0000255" key="1">
    <source>
        <dbReference type="PROSITE-ProRule" id="PRU00042"/>
    </source>
</evidence>
<evidence type="ECO:0000256" key="2">
    <source>
        <dbReference type="SAM" id="MobiDB-lite"/>
    </source>
</evidence>
<evidence type="ECO:0000269" key="3">
    <source>
    </source>
</evidence>
<evidence type="ECO:0000269" key="4">
    <source>
    </source>
</evidence>
<evidence type="ECO:0000269" key="5">
    <source>
    </source>
</evidence>
<evidence type="ECO:0000269" key="6">
    <source>
    </source>
</evidence>
<evidence type="ECO:0000303" key="7">
    <source>
    </source>
</evidence>
<organism>
    <name type="scientific">Candida glabrata (strain ATCC 2001 / BCRC 20586 / JCM 3761 / NBRC 0622 / NRRL Y-65 / CBS 138)</name>
    <name type="common">Yeast</name>
    <name type="synonym">Nakaseomyces glabratus</name>
    <dbReference type="NCBI Taxonomy" id="284593"/>
    <lineage>
        <taxon>Eukaryota</taxon>
        <taxon>Fungi</taxon>
        <taxon>Dikarya</taxon>
        <taxon>Ascomycota</taxon>
        <taxon>Saccharomycotina</taxon>
        <taxon>Saccharomycetes</taxon>
        <taxon>Saccharomycetales</taxon>
        <taxon>Saccharomycetaceae</taxon>
        <taxon>Nakaseomyces</taxon>
    </lineage>
</organism>
<reference key="1">
    <citation type="journal article" date="2004" name="Nature">
        <title>Genome evolution in yeasts.</title>
        <authorList>
            <person name="Dujon B."/>
            <person name="Sherman D."/>
            <person name="Fischer G."/>
            <person name="Durrens P."/>
            <person name="Casaregola S."/>
            <person name="Lafontaine I."/>
            <person name="de Montigny J."/>
            <person name="Marck C."/>
            <person name="Neuveglise C."/>
            <person name="Talla E."/>
            <person name="Goffard N."/>
            <person name="Frangeul L."/>
            <person name="Aigle M."/>
            <person name="Anthouard V."/>
            <person name="Babour A."/>
            <person name="Barbe V."/>
            <person name="Barnay S."/>
            <person name="Blanchin S."/>
            <person name="Beckerich J.-M."/>
            <person name="Beyne E."/>
            <person name="Bleykasten C."/>
            <person name="Boisrame A."/>
            <person name="Boyer J."/>
            <person name="Cattolico L."/>
            <person name="Confanioleri F."/>
            <person name="de Daruvar A."/>
            <person name="Despons L."/>
            <person name="Fabre E."/>
            <person name="Fairhead C."/>
            <person name="Ferry-Dumazet H."/>
            <person name="Groppi A."/>
            <person name="Hantraye F."/>
            <person name="Hennequin C."/>
            <person name="Jauniaux N."/>
            <person name="Joyet P."/>
            <person name="Kachouri R."/>
            <person name="Kerrest A."/>
            <person name="Koszul R."/>
            <person name="Lemaire M."/>
            <person name="Lesur I."/>
            <person name="Ma L."/>
            <person name="Muller H."/>
            <person name="Nicaud J.-M."/>
            <person name="Nikolski M."/>
            <person name="Oztas S."/>
            <person name="Ozier-Kalogeropoulos O."/>
            <person name="Pellenz S."/>
            <person name="Potier S."/>
            <person name="Richard G.-F."/>
            <person name="Straub M.-L."/>
            <person name="Suleau A."/>
            <person name="Swennen D."/>
            <person name="Tekaia F."/>
            <person name="Wesolowski-Louvel M."/>
            <person name="Westhof E."/>
            <person name="Wirth B."/>
            <person name="Zeniou-Meyer M."/>
            <person name="Zivanovic Y."/>
            <person name="Bolotin-Fukuhara M."/>
            <person name="Thierry A."/>
            <person name="Bouchier C."/>
            <person name="Caudron B."/>
            <person name="Scarpelli C."/>
            <person name="Gaillardin C."/>
            <person name="Weissenbach J."/>
            <person name="Wincker P."/>
            <person name="Souciet J.-L."/>
        </authorList>
    </citation>
    <scope>NUCLEOTIDE SEQUENCE [LARGE SCALE GENOMIC DNA]</scope>
    <source>
        <strain>ATCC 2001 / BCRC 20586 / JCM 3761 / NBRC 0622 / NRRL Y-65 / CBS 138</strain>
    </source>
</reference>
<reference key="2">
    <citation type="journal article" date="2006" name="Mol. Microbiol.">
        <title>Pdr1 regulates multidrug resistance in Candida glabrata: gene disruption and genome-wide expression studies.</title>
        <authorList>
            <person name="Vermitsky J.P."/>
            <person name="Earhart K.D."/>
            <person name="Smith W.L."/>
            <person name="Homayouni R."/>
            <person name="Edlind T.D."/>
            <person name="Rogers P.D."/>
        </authorList>
    </citation>
    <scope>INDUCTION</scope>
</reference>
<reference key="3">
    <citation type="journal article" date="2008" name="BMC Genomics">
        <title>Structure and properties of transcriptional networks driving selenite stress response in yeasts.</title>
        <authorList>
            <person name="Salin H."/>
            <person name="Fardeau V."/>
            <person name="Piccini E."/>
            <person name="Lelandais G."/>
            <person name="Tanty V."/>
            <person name="Lemoine S."/>
            <person name="Jacq C."/>
            <person name="Devaux F."/>
        </authorList>
    </citation>
    <scope>IDENTIFICATION</scope>
    <scope>FUNCTION</scope>
</reference>
<reference key="4">
    <citation type="journal article" date="2019" name="Mol. Biol. (Mosk.)">
        <title>[Candida glabrata Rpn4-like Protein Complements the RPN4 Deletion in Saccharomyces cerevisiae].</title>
        <authorList>
            <person name="Karpov D.S."/>
            <person name="Grineva E.N."/>
            <person name="Kiseleva S.V."/>
            <person name="Chelarskaya E.S."/>
            <person name="Spasskaya D.S."/>
            <person name="Karpov V.L."/>
        </authorList>
    </citation>
    <scope>FUNCTION</scope>
</reference>
<reference key="5">
    <citation type="journal article" date="2020" name="Antimicrob. Agents Chemother.">
        <title>Candida glabrata Transcription Factor Rpn4 Mediates Fluconazole Resistance through Regulation of Ergosterol Biosynthesis and Plasma Membrane Permeability.</title>
        <authorList>
            <person name="Pais P."/>
            <person name="California R."/>
            <person name="Galocha M."/>
            <person name="Viana R."/>
            <person name="Ola M."/>
            <person name="Cavalheiro M."/>
            <person name="Takahashi-Nakaguchi A."/>
            <person name="Chibana H."/>
            <person name="Butler G."/>
            <person name="Teixeira M.C."/>
        </authorList>
    </citation>
    <scope>FUNCTION</scope>
    <scope>SUBCELLULAR LOCATION</scope>
    <scope>DNA-BINDING</scope>
</reference>
<dbReference type="EMBL" id="CR380957">
    <property type="protein sequence ID" value="CAG61261.1"/>
    <property type="molecule type" value="Genomic_DNA"/>
</dbReference>
<dbReference type="RefSeq" id="XP_448300.1">
    <property type="nucleotide sequence ID" value="XM_448300.1"/>
</dbReference>
<dbReference type="FunCoup" id="Q6FN94">
    <property type="interactions" value="4167"/>
</dbReference>
<dbReference type="STRING" id="284593.Q6FN94"/>
<dbReference type="EnsemblFungi" id="CAGL0K01727g-T">
    <property type="protein sequence ID" value="CAGL0K01727g-T-p1"/>
    <property type="gene ID" value="CAGL0K01727g"/>
</dbReference>
<dbReference type="GeneID" id="2890026"/>
<dbReference type="KEGG" id="cgr:2890026"/>
<dbReference type="CGD" id="CAL0134161">
    <property type="gene designation" value="RPN4"/>
</dbReference>
<dbReference type="VEuPathDB" id="FungiDB:CAGL0K01727g"/>
<dbReference type="eggNOG" id="ENOG502RBAK">
    <property type="taxonomic scope" value="Eukaryota"/>
</dbReference>
<dbReference type="HOGENOM" id="CLU_038620_0_0_1"/>
<dbReference type="InParanoid" id="Q6FN94"/>
<dbReference type="Proteomes" id="UP000002428">
    <property type="component" value="Chromosome K"/>
</dbReference>
<dbReference type="GO" id="GO:0005634">
    <property type="term" value="C:nucleus"/>
    <property type="evidence" value="ECO:0007669"/>
    <property type="project" value="UniProtKB-SubCell"/>
</dbReference>
<dbReference type="GO" id="GO:0003677">
    <property type="term" value="F:DNA binding"/>
    <property type="evidence" value="ECO:0007669"/>
    <property type="project" value="UniProtKB-KW"/>
</dbReference>
<dbReference type="GO" id="GO:0008270">
    <property type="term" value="F:zinc ion binding"/>
    <property type="evidence" value="ECO:0007669"/>
    <property type="project" value="UniProtKB-KW"/>
</dbReference>
<dbReference type="GO" id="GO:0045944">
    <property type="term" value="P:positive regulation of transcription by RNA polymerase II"/>
    <property type="evidence" value="ECO:0000314"/>
    <property type="project" value="CGD"/>
</dbReference>
<dbReference type="GO" id="GO:2001023">
    <property type="term" value="P:regulation of response to drug"/>
    <property type="evidence" value="ECO:0000314"/>
    <property type="project" value="CGD"/>
</dbReference>
<dbReference type="Gene3D" id="3.30.160.60">
    <property type="entry name" value="Classic Zinc Finger"/>
    <property type="match status" value="1"/>
</dbReference>
<dbReference type="InterPro" id="IPR013087">
    <property type="entry name" value="Znf_C2H2_type"/>
</dbReference>
<dbReference type="PROSITE" id="PS50157">
    <property type="entry name" value="ZINC_FINGER_C2H2_2"/>
    <property type="match status" value="1"/>
</dbReference>
<feature type="chain" id="PRO_0000459090" description="C2H2-type transcription factor RPN4">
    <location>
        <begin position="1"/>
        <end position="499"/>
    </location>
</feature>
<feature type="zinc finger region" description="C2H2-type" evidence="1">
    <location>
        <begin position="405"/>
        <end position="436"/>
    </location>
</feature>
<feature type="region of interest" description="Disordered" evidence="2">
    <location>
        <begin position="329"/>
        <end position="397"/>
    </location>
</feature>
<feature type="compositionally biased region" description="Basic and acidic residues" evidence="2">
    <location>
        <begin position="331"/>
        <end position="344"/>
    </location>
</feature>
<feature type="compositionally biased region" description="Polar residues" evidence="2">
    <location>
        <begin position="345"/>
        <end position="363"/>
    </location>
</feature>
<name>RPN4_CANGA</name>
<keyword id="KW-0010">Activator</keyword>
<keyword id="KW-0238">DNA-binding</keyword>
<keyword id="KW-0479">Metal-binding</keyword>
<keyword id="KW-0539">Nucleus</keyword>
<keyword id="KW-1185">Reference proteome</keyword>
<keyword id="KW-0804">Transcription</keyword>
<keyword id="KW-0805">Transcription regulation</keyword>
<keyword id="KW-0862">Zinc</keyword>
<keyword id="KW-0863">Zinc-finger</keyword>
<comment type="function">
    <text evidence="4 5 6">Transcription factor that acts as a transcriptional activator of a number of genes encoding proteasomal subunits (PubMed:31099777, PubMed:32571817). Plays a role in ergosterol and plasma membrane homeostasis, and subsequent azole resistance (PubMed:18627600, PubMed:32571817). Regulates the expression of 212 genes, activating 80 genes and repressing, likely in an indirect fashion, 132 genes (PubMed:32571817). Targets comprise several proteasome and ergosterol biosynthesis genes, including ERG1, ERG2, ERG3, and ERG11 (PubMed:32571817). Directly regulates ERG11 expression through the 3'-TTGCAAA-5' binding motif (PubMed:32571817).</text>
</comment>
<comment type="subcellular location">
    <subcellularLocation>
        <location evidence="6">Nucleus</location>
    </subcellularLocation>
    <text evidence="6">The localization to the nucleus increases upon fluconazole stress.</text>
</comment>
<comment type="induction">
    <text evidence="3">Expression is up-regulated in a fluconazole-resistant mutant.</text>
</comment>